<evidence type="ECO:0000250" key="1"/>
<evidence type="ECO:0000305" key="2"/>
<evidence type="ECO:0007829" key="3">
    <source>
        <dbReference type="PDB" id="4L8L"/>
    </source>
</evidence>
<sequence>MATLLVLHGPNLNLLGTREPGTYGSTTLGQINQDLERRAREAGHHLLHLQSNAEYELIDRIHAARDEGVDFIIINPAAFTHTSVALRDALLAVSIPFIEVHLSNVHKREPFRHHSYFSDVAVGVICGLGATGYRLALESALEQLQRP</sequence>
<proteinExistence type="evidence at protein level"/>
<accession>O30557</accession>
<gene>
    <name type="primary">aroQ1</name>
    <name type="synonym">aroQ</name>
    <name type="ordered locus">PA4846</name>
</gene>
<dbReference type="EC" id="4.2.1.10"/>
<dbReference type="EMBL" id="AF010322">
    <property type="protein sequence ID" value="AAB84085.1"/>
    <property type="molecule type" value="Genomic_DNA"/>
</dbReference>
<dbReference type="EMBL" id="AE004091">
    <property type="protein sequence ID" value="AAG08231.1"/>
    <property type="molecule type" value="Genomic_DNA"/>
</dbReference>
<dbReference type="PIR" id="F83039">
    <property type="entry name" value="F83039"/>
</dbReference>
<dbReference type="RefSeq" id="NP_253533.1">
    <property type="nucleotide sequence ID" value="NC_002516.2"/>
</dbReference>
<dbReference type="RefSeq" id="WP_003095385.1">
    <property type="nucleotide sequence ID" value="NZ_QZGE01000002.1"/>
</dbReference>
<dbReference type="PDB" id="4L8L">
    <property type="method" value="X-ray"/>
    <property type="resolution" value="1.74 A"/>
    <property type="chains" value="A=3-145"/>
</dbReference>
<dbReference type="PDBsum" id="4L8L"/>
<dbReference type="SMR" id="O30557"/>
<dbReference type="STRING" id="208964.PA4846"/>
<dbReference type="PaxDb" id="208964-PA4846"/>
<dbReference type="DNASU" id="878093"/>
<dbReference type="GeneID" id="77223394"/>
<dbReference type="GeneID" id="878093"/>
<dbReference type="KEGG" id="pae:PA4846"/>
<dbReference type="PATRIC" id="fig|208964.12.peg.5078"/>
<dbReference type="PseudoCAP" id="PA4846"/>
<dbReference type="HOGENOM" id="CLU_090968_1_0_6"/>
<dbReference type="InParanoid" id="O30557"/>
<dbReference type="OrthoDB" id="9790793at2"/>
<dbReference type="PhylomeDB" id="O30557"/>
<dbReference type="BioCyc" id="PAER208964:G1FZ6-4960-MONOMER"/>
<dbReference type="BRENDA" id="4.2.1.10">
    <property type="organism ID" value="5087"/>
</dbReference>
<dbReference type="UniPathway" id="UPA00053">
    <property type="reaction ID" value="UER00086"/>
</dbReference>
<dbReference type="EvolutionaryTrace" id="O30557"/>
<dbReference type="Proteomes" id="UP000002438">
    <property type="component" value="Chromosome"/>
</dbReference>
<dbReference type="GO" id="GO:0003855">
    <property type="term" value="F:3-dehydroquinate dehydratase activity"/>
    <property type="evidence" value="ECO:0000318"/>
    <property type="project" value="GO_Central"/>
</dbReference>
<dbReference type="GO" id="GO:0008652">
    <property type="term" value="P:amino acid biosynthetic process"/>
    <property type="evidence" value="ECO:0007669"/>
    <property type="project" value="UniProtKB-KW"/>
</dbReference>
<dbReference type="GO" id="GO:0009073">
    <property type="term" value="P:aromatic amino acid family biosynthetic process"/>
    <property type="evidence" value="ECO:0007669"/>
    <property type="project" value="UniProtKB-KW"/>
</dbReference>
<dbReference type="GO" id="GO:0009423">
    <property type="term" value="P:chorismate biosynthetic process"/>
    <property type="evidence" value="ECO:0007669"/>
    <property type="project" value="UniProtKB-UniRule"/>
</dbReference>
<dbReference type="GO" id="GO:0019631">
    <property type="term" value="P:quinate catabolic process"/>
    <property type="evidence" value="ECO:0000318"/>
    <property type="project" value="GO_Central"/>
</dbReference>
<dbReference type="CDD" id="cd00466">
    <property type="entry name" value="DHQase_II"/>
    <property type="match status" value="1"/>
</dbReference>
<dbReference type="Gene3D" id="3.40.50.9100">
    <property type="entry name" value="Dehydroquinase, class II"/>
    <property type="match status" value="1"/>
</dbReference>
<dbReference type="HAMAP" id="MF_00169">
    <property type="entry name" value="AroQ"/>
    <property type="match status" value="1"/>
</dbReference>
<dbReference type="InterPro" id="IPR001874">
    <property type="entry name" value="DHquinase_II"/>
</dbReference>
<dbReference type="InterPro" id="IPR018509">
    <property type="entry name" value="DHquinase_II_CS"/>
</dbReference>
<dbReference type="InterPro" id="IPR036441">
    <property type="entry name" value="DHquinase_II_sf"/>
</dbReference>
<dbReference type="NCBIfam" id="TIGR01088">
    <property type="entry name" value="aroQ"/>
    <property type="match status" value="1"/>
</dbReference>
<dbReference type="NCBIfam" id="NF003804">
    <property type="entry name" value="PRK05395.1-1"/>
    <property type="match status" value="1"/>
</dbReference>
<dbReference type="NCBIfam" id="NF003805">
    <property type="entry name" value="PRK05395.1-2"/>
    <property type="match status" value="1"/>
</dbReference>
<dbReference type="NCBIfam" id="NF003806">
    <property type="entry name" value="PRK05395.1-3"/>
    <property type="match status" value="1"/>
</dbReference>
<dbReference type="NCBIfam" id="NF003807">
    <property type="entry name" value="PRK05395.1-4"/>
    <property type="match status" value="1"/>
</dbReference>
<dbReference type="PANTHER" id="PTHR21272">
    <property type="entry name" value="CATABOLIC 3-DEHYDROQUINASE"/>
    <property type="match status" value="1"/>
</dbReference>
<dbReference type="PANTHER" id="PTHR21272:SF3">
    <property type="entry name" value="CATABOLIC 3-DEHYDROQUINASE"/>
    <property type="match status" value="1"/>
</dbReference>
<dbReference type="Pfam" id="PF01220">
    <property type="entry name" value="DHquinase_II"/>
    <property type="match status" value="1"/>
</dbReference>
<dbReference type="PIRSF" id="PIRSF001399">
    <property type="entry name" value="DHquinase_II"/>
    <property type="match status" value="1"/>
</dbReference>
<dbReference type="SUPFAM" id="SSF52304">
    <property type="entry name" value="Type II 3-dehydroquinate dehydratase"/>
    <property type="match status" value="1"/>
</dbReference>
<dbReference type="PROSITE" id="PS01029">
    <property type="entry name" value="DEHYDROQUINASE_II"/>
    <property type="match status" value="1"/>
</dbReference>
<name>AROQ1_PSEAE</name>
<reference key="1">
    <citation type="journal article" date="1997" name="Microbiology">
        <title>Disruption of the Pseudomonas aeruginosa dipZ gene, encoding a putative protein-disulfide reductase, leads to partial pleiotropic deficiency in c-type cytochrome biogenesis.</title>
        <authorList>
            <person name="Page M.D."/>
            <person name="Saunders N.F.W."/>
            <person name="Ferguson S.J."/>
        </authorList>
    </citation>
    <scope>NUCLEOTIDE SEQUENCE [GENOMIC DNA]</scope>
    <source>
        <strain>ATCC 15692 / DSM 22644 / CIP 104116 / JCM 14847 / LMG 12228 / 1C / PRS 101 / PAO1</strain>
    </source>
</reference>
<reference key="2">
    <citation type="journal article" date="2000" name="Nature">
        <title>Complete genome sequence of Pseudomonas aeruginosa PAO1, an opportunistic pathogen.</title>
        <authorList>
            <person name="Stover C.K."/>
            <person name="Pham X.-Q.T."/>
            <person name="Erwin A.L."/>
            <person name="Mizoguchi S.D."/>
            <person name="Warrener P."/>
            <person name="Hickey M.J."/>
            <person name="Brinkman F.S.L."/>
            <person name="Hufnagle W.O."/>
            <person name="Kowalik D.J."/>
            <person name="Lagrou M."/>
            <person name="Garber R.L."/>
            <person name="Goltry L."/>
            <person name="Tolentino E."/>
            <person name="Westbrock-Wadman S."/>
            <person name="Yuan Y."/>
            <person name="Brody L.L."/>
            <person name="Coulter S.N."/>
            <person name="Folger K.R."/>
            <person name="Kas A."/>
            <person name="Larbig K."/>
            <person name="Lim R.M."/>
            <person name="Smith K.A."/>
            <person name="Spencer D.H."/>
            <person name="Wong G.K.-S."/>
            <person name="Wu Z."/>
            <person name="Paulsen I.T."/>
            <person name="Reizer J."/>
            <person name="Saier M.H. Jr."/>
            <person name="Hancock R.E.W."/>
            <person name="Lory S."/>
            <person name="Olson M.V."/>
        </authorList>
    </citation>
    <scope>NUCLEOTIDE SEQUENCE [LARGE SCALE GENOMIC DNA]</scope>
    <source>
        <strain>ATCC 15692 / DSM 22644 / CIP 104116 / JCM 14847 / LMG 12228 / 1C / PRS 101 / PAO1</strain>
    </source>
</reference>
<protein>
    <recommendedName>
        <fullName>3-dehydroquinate dehydratase 1</fullName>
        <shortName>3-dehydroquinase 1</shortName>
        <ecNumber>4.2.1.10</ecNumber>
    </recommendedName>
    <alternativeName>
        <fullName>Type II DHQase 1</fullName>
    </alternativeName>
</protein>
<feature type="chain" id="PRO_0000159918" description="3-dehydroquinate dehydratase 1">
    <location>
        <begin position="1"/>
        <end position="147"/>
    </location>
</feature>
<feature type="active site" description="Proton acceptor" evidence="1">
    <location>
        <position position="23"/>
    </location>
</feature>
<feature type="active site" description="Proton donor" evidence="1">
    <location>
        <position position="101"/>
    </location>
</feature>
<feature type="binding site" evidence="1">
    <location>
        <position position="75"/>
    </location>
    <ligand>
        <name>substrate</name>
    </ligand>
</feature>
<feature type="binding site" evidence="1">
    <location>
        <position position="81"/>
    </location>
    <ligand>
        <name>substrate</name>
    </ligand>
</feature>
<feature type="binding site" evidence="1">
    <location>
        <position position="88"/>
    </location>
    <ligand>
        <name>substrate</name>
    </ligand>
</feature>
<feature type="binding site" evidence="1">
    <location>
        <begin position="102"/>
        <end position="103"/>
    </location>
    <ligand>
        <name>substrate</name>
    </ligand>
</feature>
<feature type="binding site" evidence="1">
    <location>
        <position position="112"/>
    </location>
    <ligand>
        <name>substrate</name>
    </ligand>
</feature>
<feature type="site" description="Transition state stabilizer" evidence="1">
    <location>
        <position position="18"/>
    </location>
</feature>
<feature type="strand" evidence="3">
    <location>
        <begin position="3"/>
        <end position="8"/>
    </location>
</feature>
<feature type="helix" evidence="3">
    <location>
        <begin position="12"/>
        <end position="14"/>
    </location>
</feature>
<feature type="helix" evidence="3">
    <location>
        <begin position="28"/>
        <end position="41"/>
    </location>
</feature>
<feature type="strand" evidence="3">
    <location>
        <begin position="45"/>
        <end position="50"/>
    </location>
</feature>
<feature type="helix" evidence="3">
    <location>
        <begin position="54"/>
        <end position="66"/>
    </location>
</feature>
<feature type="strand" evidence="3">
    <location>
        <begin position="71"/>
        <end position="75"/>
    </location>
</feature>
<feature type="helix" evidence="3">
    <location>
        <begin position="77"/>
        <end position="81"/>
    </location>
</feature>
<feature type="helix" evidence="3">
    <location>
        <begin position="84"/>
        <end position="93"/>
    </location>
</feature>
<feature type="strand" evidence="3">
    <location>
        <begin position="97"/>
        <end position="103"/>
    </location>
</feature>
<feature type="helix" evidence="3">
    <location>
        <begin position="105"/>
        <end position="107"/>
    </location>
</feature>
<feature type="helix" evidence="3">
    <location>
        <begin position="110"/>
        <end position="113"/>
    </location>
</feature>
<feature type="helix" evidence="3">
    <location>
        <begin position="118"/>
        <end position="120"/>
    </location>
</feature>
<feature type="strand" evidence="3">
    <location>
        <begin position="121"/>
        <end position="128"/>
    </location>
</feature>
<feature type="helix" evidence="3">
    <location>
        <begin position="131"/>
        <end position="144"/>
    </location>
</feature>
<keyword id="KW-0002">3D-structure</keyword>
<keyword id="KW-0028">Amino-acid biosynthesis</keyword>
<keyword id="KW-0057">Aromatic amino acid biosynthesis</keyword>
<keyword id="KW-0456">Lyase</keyword>
<keyword id="KW-1185">Reference proteome</keyword>
<comment type="function">
    <text evidence="1">Catalyzes a trans-dehydration via an enolate intermediate.</text>
</comment>
<comment type="catalytic activity">
    <reaction>
        <text>3-dehydroquinate = 3-dehydroshikimate + H2O</text>
        <dbReference type="Rhea" id="RHEA:21096"/>
        <dbReference type="ChEBI" id="CHEBI:15377"/>
        <dbReference type="ChEBI" id="CHEBI:16630"/>
        <dbReference type="ChEBI" id="CHEBI:32364"/>
        <dbReference type="EC" id="4.2.1.10"/>
    </reaction>
</comment>
<comment type="pathway">
    <text>Metabolic intermediate biosynthesis; chorismate biosynthesis; chorismate from D-erythrose 4-phosphate and phosphoenolpyruvate: step 3/7.</text>
</comment>
<comment type="subunit">
    <text evidence="1">Homododecamer.</text>
</comment>
<comment type="similarity">
    <text evidence="2">Belongs to the type-II 3-dehydroquinase family.</text>
</comment>
<organism>
    <name type="scientific">Pseudomonas aeruginosa (strain ATCC 15692 / DSM 22644 / CIP 104116 / JCM 14847 / LMG 12228 / 1C / PRS 101 / PAO1)</name>
    <dbReference type="NCBI Taxonomy" id="208964"/>
    <lineage>
        <taxon>Bacteria</taxon>
        <taxon>Pseudomonadati</taxon>
        <taxon>Pseudomonadota</taxon>
        <taxon>Gammaproteobacteria</taxon>
        <taxon>Pseudomonadales</taxon>
        <taxon>Pseudomonadaceae</taxon>
        <taxon>Pseudomonas</taxon>
    </lineage>
</organism>